<sequence length="329" mass="36186">MKVYYEQDANLEVLKGKTVAIIGYGSQGHAHAQNLRDSGVNVIVGQRPGGPNFELAKEHGFQPLSAAEAAAQADLIMILLPDQYQASVYENDIKPHLTAGKSLVFAHGFNIHFNQIVPPKDVDVFMIAPKGPGHLVRRTYTEGGGVPCLVAIHQDASGQAMEKALAYAMGVGGTRSGVIETTFREETETDLFGEQAVLCGGISALIQAGFETLVEAGYQPEIAYFECLHETKLIVDLIYEGGLAKMRHSISDTAEYGDYVTGRRIVTEETKKEMKAALKDIQEGRFARDFILECKANYPTFTARRRIEAEHPIEEVGARLRSMMPWLKK</sequence>
<organism>
    <name type="scientific">Oleidesulfovibrio alaskensis (strain ATCC BAA-1058 / DSM 17464 / G20)</name>
    <name type="common">Desulfovibrio alaskensis</name>
    <dbReference type="NCBI Taxonomy" id="207559"/>
    <lineage>
        <taxon>Bacteria</taxon>
        <taxon>Pseudomonadati</taxon>
        <taxon>Thermodesulfobacteriota</taxon>
        <taxon>Desulfovibrionia</taxon>
        <taxon>Desulfovibrionales</taxon>
        <taxon>Desulfovibrionaceae</taxon>
        <taxon>Oleidesulfovibrio</taxon>
    </lineage>
</organism>
<protein>
    <recommendedName>
        <fullName evidence="1">Ketol-acid reductoisomerase (NADP(+))</fullName>
        <shortName evidence="1">KARI</shortName>
        <ecNumber evidence="1">1.1.1.86</ecNumber>
    </recommendedName>
    <alternativeName>
        <fullName evidence="1">Acetohydroxy-acid isomeroreductase</fullName>
        <shortName evidence="1">AHIR</shortName>
    </alternativeName>
    <alternativeName>
        <fullName evidence="1">Alpha-keto-beta-hydroxylacyl reductoisomerase</fullName>
    </alternativeName>
    <alternativeName>
        <fullName evidence="1">Ketol-acid reductoisomerase type 1</fullName>
    </alternativeName>
    <alternativeName>
        <fullName evidence="1">Ketol-acid reductoisomerase type I</fullName>
    </alternativeName>
</protein>
<proteinExistence type="inferred from homology"/>
<dbReference type="EC" id="1.1.1.86" evidence="1"/>
<dbReference type="EMBL" id="CP000112">
    <property type="protein sequence ID" value="ABB38963.1"/>
    <property type="molecule type" value="Genomic_DNA"/>
</dbReference>
<dbReference type="RefSeq" id="WP_011368060.1">
    <property type="nucleotide sequence ID" value="NC_007519.1"/>
</dbReference>
<dbReference type="SMR" id="Q30ZD3"/>
<dbReference type="STRING" id="207559.Dde_2166"/>
<dbReference type="KEGG" id="dde:Dde_2166"/>
<dbReference type="eggNOG" id="COG0059">
    <property type="taxonomic scope" value="Bacteria"/>
</dbReference>
<dbReference type="HOGENOM" id="CLU_033821_0_1_7"/>
<dbReference type="UniPathway" id="UPA00047">
    <property type="reaction ID" value="UER00056"/>
</dbReference>
<dbReference type="UniPathway" id="UPA00049">
    <property type="reaction ID" value="UER00060"/>
</dbReference>
<dbReference type="Proteomes" id="UP000002710">
    <property type="component" value="Chromosome"/>
</dbReference>
<dbReference type="GO" id="GO:0005829">
    <property type="term" value="C:cytosol"/>
    <property type="evidence" value="ECO:0007669"/>
    <property type="project" value="TreeGrafter"/>
</dbReference>
<dbReference type="GO" id="GO:0004455">
    <property type="term" value="F:ketol-acid reductoisomerase activity"/>
    <property type="evidence" value="ECO:0007669"/>
    <property type="project" value="UniProtKB-UniRule"/>
</dbReference>
<dbReference type="GO" id="GO:0000287">
    <property type="term" value="F:magnesium ion binding"/>
    <property type="evidence" value="ECO:0007669"/>
    <property type="project" value="UniProtKB-UniRule"/>
</dbReference>
<dbReference type="GO" id="GO:0050661">
    <property type="term" value="F:NADP binding"/>
    <property type="evidence" value="ECO:0007669"/>
    <property type="project" value="InterPro"/>
</dbReference>
<dbReference type="GO" id="GO:0009097">
    <property type="term" value="P:isoleucine biosynthetic process"/>
    <property type="evidence" value="ECO:0007669"/>
    <property type="project" value="UniProtKB-UniRule"/>
</dbReference>
<dbReference type="GO" id="GO:0009099">
    <property type="term" value="P:L-valine biosynthetic process"/>
    <property type="evidence" value="ECO:0007669"/>
    <property type="project" value="UniProtKB-UniRule"/>
</dbReference>
<dbReference type="FunFam" id="3.40.50.720:FF:000023">
    <property type="entry name" value="Ketol-acid reductoisomerase (NADP(+))"/>
    <property type="match status" value="1"/>
</dbReference>
<dbReference type="Gene3D" id="6.10.240.10">
    <property type="match status" value="1"/>
</dbReference>
<dbReference type="Gene3D" id="3.40.50.720">
    <property type="entry name" value="NAD(P)-binding Rossmann-like Domain"/>
    <property type="match status" value="1"/>
</dbReference>
<dbReference type="HAMAP" id="MF_00435">
    <property type="entry name" value="IlvC"/>
    <property type="match status" value="1"/>
</dbReference>
<dbReference type="InterPro" id="IPR008927">
    <property type="entry name" value="6-PGluconate_DH-like_C_sf"/>
</dbReference>
<dbReference type="InterPro" id="IPR013023">
    <property type="entry name" value="KARI"/>
</dbReference>
<dbReference type="InterPro" id="IPR000506">
    <property type="entry name" value="KARI_C"/>
</dbReference>
<dbReference type="InterPro" id="IPR013116">
    <property type="entry name" value="KARI_N"/>
</dbReference>
<dbReference type="InterPro" id="IPR014359">
    <property type="entry name" value="KARI_prok"/>
</dbReference>
<dbReference type="InterPro" id="IPR036291">
    <property type="entry name" value="NAD(P)-bd_dom_sf"/>
</dbReference>
<dbReference type="NCBIfam" id="TIGR00465">
    <property type="entry name" value="ilvC"/>
    <property type="match status" value="1"/>
</dbReference>
<dbReference type="NCBIfam" id="NF004017">
    <property type="entry name" value="PRK05479.1"/>
    <property type="match status" value="1"/>
</dbReference>
<dbReference type="NCBIfam" id="NF009940">
    <property type="entry name" value="PRK13403.1"/>
    <property type="match status" value="1"/>
</dbReference>
<dbReference type="PANTHER" id="PTHR21371">
    <property type="entry name" value="KETOL-ACID REDUCTOISOMERASE, MITOCHONDRIAL"/>
    <property type="match status" value="1"/>
</dbReference>
<dbReference type="PANTHER" id="PTHR21371:SF1">
    <property type="entry name" value="KETOL-ACID REDUCTOISOMERASE, MITOCHONDRIAL"/>
    <property type="match status" value="1"/>
</dbReference>
<dbReference type="Pfam" id="PF01450">
    <property type="entry name" value="KARI_C"/>
    <property type="match status" value="1"/>
</dbReference>
<dbReference type="Pfam" id="PF07991">
    <property type="entry name" value="KARI_N"/>
    <property type="match status" value="1"/>
</dbReference>
<dbReference type="PIRSF" id="PIRSF000116">
    <property type="entry name" value="IlvC_gammaproteo"/>
    <property type="match status" value="1"/>
</dbReference>
<dbReference type="SUPFAM" id="SSF48179">
    <property type="entry name" value="6-phosphogluconate dehydrogenase C-terminal domain-like"/>
    <property type="match status" value="1"/>
</dbReference>
<dbReference type="SUPFAM" id="SSF51735">
    <property type="entry name" value="NAD(P)-binding Rossmann-fold domains"/>
    <property type="match status" value="1"/>
</dbReference>
<dbReference type="PROSITE" id="PS51851">
    <property type="entry name" value="KARI_C"/>
    <property type="match status" value="1"/>
</dbReference>
<dbReference type="PROSITE" id="PS51850">
    <property type="entry name" value="KARI_N"/>
    <property type="match status" value="1"/>
</dbReference>
<accession>Q30ZD3</accession>
<gene>
    <name evidence="1" type="primary">ilvC</name>
    <name type="ordered locus">Dde_2166</name>
</gene>
<name>ILVC_OLEA2</name>
<evidence type="ECO:0000255" key="1">
    <source>
        <dbReference type="HAMAP-Rule" id="MF_00435"/>
    </source>
</evidence>
<evidence type="ECO:0000255" key="2">
    <source>
        <dbReference type="PROSITE-ProRule" id="PRU01197"/>
    </source>
</evidence>
<evidence type="ECO:0000255" key="3">
    <source>
        <dbReference type="PROSITE-ProRule" id="PRU01198"/>
    </source>
</evidence>
<comment type="function">
    <text evidence="1">Involved in the biosynthesis of branched-chain amino acids (BCAA). Catalyzes an alkyl-migration followed by a ketol-acid reduction of (S)-2-acetolactate (S2AL) to yield (R)-2,3-dihydroxy-isovalerate. In the isomerase reaction, S2AL is rearranged via a Mg-dependent methyl migration to produce 3-hydroxy-3-methyl-2-ketobutyrate (HMKB). In the reductase reaction, this 2-ketoacid undergoes a metal-dependent reduction by NADPH to yield (R)-2,3-dihydroxy-isovalerate.</text>
</comment>
<comment type="catalytic activity">
    <reaction evidence="1">
        <text>(2R)-2,3-dihydroxy-3-methylbutanoate + NADP(+) = (2S)-2-acetolactate + NADPH + H(+)</text>
        <dbReference type="Rhea" id="RHEA:22068"/>
        <dbReference type="ChEBI" id="CHEBI:15378"/>
        <dbReference type="ChEBI" id="CHEBI:49072"/>
        <dbReference type="ChEBI" id="CHEBI:57783"/>
        <dbReference type="ChEBI" id="CHEBI:58349"/>
        <dbReference type="ChEBI" id="CHEBI:58476"/>
        <dbReference type="EC" id="1.1.1.86"/>
    </reaction>
</comment>
<comment type="catalytic activity">
    <reaction evidence="1">
        <text>(2R,3R)-2,3-dihydroxy-3-methylpentanoate + NADP(+) = (S)-2-ethyl-2-hydroxy-3-oxobutanoate + NADPH + H(+)</text>
        <dbReference type="Rhea" id="RHEA:13493"/>
        <dbReference type="ChEBI" id="CHEBI:15378"/>
        <dbReference type="ChEBI" id="CHEBI:49256"/>
        <dbReference type="ChEBI" id="CHEBI:49258"/>
        <dbReference type="ChEBI" id="CHEBI:57783"/>
        <dbReference type="ChEBI" id="CHEBI:58349"/>
        <dbReference type="EC" id="1.1.1.86"/>
    </reaction>
</comment>
<comment type="cofactor">
    <cofactor evidence="1">
        <name>Mg(2+)</name>
        <dbReference type="ChEBI" id="CHEBI:18420"/>
    </cofactor>
    <text evidence="1">Binds 2 magnesium ions per subunit.</text>
</comment>
<comment type="pathway">
    <text evidence="1">Amino-acid biosynthesis; L-isoleucine biosynthesis; L-isoleucine from 2-oxobutanoate: step 2/4.</text>
</comment>
<comment type="pathway">
    <text evidence="1">Amino-acid biosynthesis; L-valine biosynthesis; L-valine from pyruvate: step 2/4.</text>
</comment>
<comment type="similarity">
    <text evidence="1">Belongs to the ketol-acid reductoisomerase family.</text>
</comment>
<keyword id="KW-0028">Amino-acid biosynthesis</keyword>
<keyword id="KW-0100">Branched-chain amino acid biosynthesis</keyword>
<keyword id="KW-0460">Magnesium</keyword>
<keyword id="KW-0479">Metal-binding</keyword>
<keyword id="KW-0521">NADP</keyword>
<keyword id="KW-0560">Oxidoreductase</keyword>
<keyword id="KW-1185">Reference proteome</keyword>
<reference key="1">
    <citation type="journal article" date="2011" name="J. Bacteriol.">
        <title>Complete genome sequence and updated annotation of Desulfovibrio alaskensis G20.</title>
        <authorList>
            <person name="Hauser L.J."/>
            <person name="Land M.L."/>
            <person name="Brown S.D."/>
            <person name="Larimer F."/>
            <person name="Keller K.L."/>
            <person name="Rapp-Giles B.J."/>
            <person name="Price M.N."/>
            <person name="Lin M."/>
            <person name="Bruce D.C."/>
            <person name="Detter J.C."/>
            <person name="Tapia R."/>
            <person name="Han C.S."/>
            <person name="Goodwin L.A."/>
            <person name="Cheng J.F."/>
            <person name="Pitluck S."/>
            <person name="Copeland A."/>
            <person name="Lucas S."/>
            <person name="Nolan M."/>
            <person name="Lapidus A.L."/>
            <person name="Palumbo A.V."/>
            <person name="Wall J.D."/>
        </authorList>
    </citation>
    <scope>NUCLEOTIDE SEQUENCE [LARGE SCALE GENOMIC DNA]</scope>
    <source>
        <strain>ATCC BAA-1058 / DSM 17464 / G20</strain>
    </source>
</reference>
<feature type="chain" id="PRO_0000226176" description="Ketol-acid reductoisomerase (NADP(+))">
    <location>
        <begin position="1"/>
        <end position="329"/>
    </location>
</feature>
<feature type="domain" description="KARI N-terminal Rossmann" evidence="2">
    <location>
        <begin position="1"/>
        <end position="181"/>
    </location>
</feature>
<feature type="domain" description="KARI C-terminal knotted" evidence="3">
    <location>
        <begin position="182"/>
        <end position="327"/>
    </location>
</feature>
<feature type="active site" evidence="1">
    <location>
        <position position="107"/>
    </location>
</feature>
<feature type="binding site" evidence="1">
    <location>
        <begin position="24"/>
        <end position="27"/>
    </location>
    <ligand>
        <name>NADP(+)</name>
        <dbReference type="ChEBI" id="CHEBI:58349"/>
    </ligand>
</feature>
<feature type="binding site" evidence="1">
    <location>
        <position position="47"/>
    </location>
    <ligand>
        <name>NADP(+)</name>
        <dbReference type="ChEBI" id="CHEBI:58349"/>
    </ligand>
</feature>
<feature type="binding site" evidence="1">
    <location>
        <begin position="82"/>
        <end position="85"/>
    </location>
    <ligand>
        <name>NADP(+)</name>
        <dbReference type="ChEBI" id="CHEBI:58349"/>
    </ligand>
</feature>
<feature type="binding site" evidence="1">
    <location>
        <position position="133"/>
    </location>
    <ligand>
        <name>NADP(+)</name>
        <dbReference type="ChEBI" id="CHEBI:58349"/>
    </ligand>
</feature>
<feature type="binding site" evidence="1">
    <location>
        <position position="190"/>
    </location>
    <ligand>
        <name>Mg(2+)</name>
        <dbReference type="ChEBI" id="CHEBI:18420"/>
        <label>1</label>
    </ligand>
</feature>
<feature type="binding site" evidence="1">
    <location>
        <position position="190"/>
    </location>
    <ligand>
        <name>Mg(2+)</name>
        <dbReference type="ChEBI" id="CHEBI:18420"/>
        <label>2</label>
    </ligand>
</feature>
<feature type="binding site" evidence="1">
    <location>
        <position position="194"/>
    </location>
    <ligand>
        <name>Mg(2+)</name>
        <dbReference type="ChEBI" id="CHEBI:18420"/>
        <label>1</label>
    </ligand>
</feature>
<feature type="binding site" evidence="1">
    <location>
        <position position="226"/>
    </location>
    <ligand>
        <name>Mg(2+)</name>
        <dbReference type="ChEBI" id="CHEBI:18420"/>
        <label>2</label>
    </ligand>
</feature>
<feature type="binding site" evidence="1">
    <location>
        <position position="230"/>
    </location>
    <ligand>
        <name>Mg(2+)</name>
        <dbReference type="ChEBI" id="CHEBI:18420"/>
        <label>2</label>
    </ligand>
</feature>
<feature type="binding site" evidence="1">
    <location>
        <position position="251"/>
    </location>
    <ligand>
        <name>substrate</name>
    </ligand>
</feature>